<accession>O14124</accession>
<feature type="signal peptide" evidence="1">
    <location>
        <begin position="1"/>
        <end position="39"/>
    </location>
</feature>
<feature type="chain" id="PRO_0000314654" description="Uncharacterized dipeptidase C3A11.10c">
    <location>
        <begin position="40"/>
        <end position="409"/>
    </location>
</feature>
<feature type="binding site" evidence="2">
    <location>
        <position position="67"/>
    </location>
    <ligand>
        <name>Zn(2+)</name>
        <dbReference type="ChEBI" id="CHEBI:29105"/>
        <label>1</label>
        <note>catalytic</note>
    </ligand>
</feature>
<feature type="binding site" evidence="2">
    <location>
        <position position="69"/>
    </location>
    <ligand>
        <name>Zn(2+)</name>
        <dbReference type="ChEBI" id="CHEBI:29105"/>
        <label>1</label>
        <note>catalytic</note>
    </ligand>
</feature>
<feature type="binding site" evidence="2">
    <location>
        <position position="181"/>
    </location>
    <ligand>
        <name>Zn(2+)</name>
        <dbReference type="ChEBI" id="CHEBI:29105"/>
        <label>1</label>
        <note>catalytic</note>
    </ligand>
</feature>
<feature type="binding site" evidence="2">
    <location>
        <position position="181"/>
    </location>
    <ligand>
        <name>Zn(2+)</name>
        <dbReference type="ChEBI" id="CHEBI:29105"/>
        <label>2</label>
        <note>catalytic</note>
    </ligand>
</feature>
<feature type="binding site" evidence="2">
    <location>
        <position position="250"/>
    </location>
    <ligand>
        <name>Zn(2+)</name>
        <dbReference type="ChEBI" id="CHEBI:29105"/>
        <label>2</label>
        <note>catalytic</note>
    </ligand>
</feature>
<feature type="binding site" evidence="2">
    <location>
        <position position="271"/>
    </location>
    <ligand>
        <name>Zn(2+)</name>
        <dbReference type="ChEBI" id="CHEBI:29105"/>
        <label>2</label>
        <note>catalytic</note>
    </ligand>
</feature>
<name>DPEH1_SCHPO</name>
<proteinExistence type="evidence at protein level"/>
<comment type="catalytic activity">
    <reaction evidence="2">
        <text>an L-aminoacyl-L-amino acid + H2O = 2 an L-alpha-amino acid</text>
        <dbReference type="Rhea" id="RHEA:48940"/>
        <dbReference type="ChEBI" id="CHEBI:15377"/>
        <dbReference type="ChEBI" id="CHEBI:59869"/>
        <dbReference type="ChEBI" id="CHEBI:77460"/>
        <dbReference type="EC" id="3.4.13.19"/>
    </reaction>
</comment>
<comment type="cofactor">
    <cofactor evidence="2">
        <name>Zn(2+)</name>
        <dbReference type="ChEBI" id="CHEBI:29105"/>
    </cofactor>
</comment>
<comment type="subunit">
    <text evidence="3">Interacts with dil1.</text>
</comment>
<comment type="similarity">
    <text evidence="2">Belongs to the metallo-dependent hydrolases superfamily. Peptidase M19 family.</text>
</comment>
<keyword id="KW-0031">Aminopeptidase</keyword>
<keyword id="KW-0224">Dipeptidase</keyword>
<keyword id="KW-0378">Hydrolase</keyword>
<keyword id="KW-0479">Metal-binding</keyword>
<keyword id="KW-0482">Metalloprotease</keyword>
<keyword id="KW-0645">Protease</keyword>
<keyword id="KW-1185">Reference proteome</keyword>
<keyword id="KW-0732">Signal</keyword>
<keyword id="KW-0862">Zinc</keyword>
<sequence>MVSDSKLELPLPVNQQKPRRRRILKVHLLIAALILSAVGYLGKGKWIWTPERKAHFVLTHFPLIDGHNDLPIYLRENYDNRLLNISLEHLPGQTDIFRLRQGHVGGQFWSVFVECPSLDSNSSLSWNRTGEYEAVTQTLQQIDVVKRMALYYPKTFSLTDHSGKVKFDFLRNHISSMMGIEGLHQIAGSPSILRQFYDLGVRYATLAHNCDNVFADAAVDGKRTNKGLSPAGRDIVREMNRLGMIVDLSHTTPETMHQALDVSVAPAFFSHSSAKGVYDHPRNVPDDVLIRVKETDGVVMVNFYPAFISPHPENATIDTVVEHIMHIANVTGSYRHIGLGGDFDGIDMVPKGLEDVSKYPDLFVKLAERGLSITELADIAGRNVLRVWKTTEDLGHSIHEPPLEWEDDF</sequence>
<organism>
    <name type="scientific">Schizosaccharomyces pombe (strain 972 / ATCC 24843)</name>
    <name type="common">Fission yeast</name>
    <dbReference type="NCBI Taxonomy" id="284812"/>
    <lineage>
        <taxon>Eukaryota</taxon>
        <taxon>Fungi</taxon>
        <taxon>Dikarya</taxon>
        <taxon>Ascomycota</taxon>
        <taxon>Taphrinomycotina</taxon>
        <taxon>Schizosaccharomycetes</taxon>
        <taxon>Schizosaccharomycetales</taxon>
        <taxon>Schizosaccharomycetaceae</taxon>
        <taxon>Schizosaccharomyces</taxon>
    </lineage>
</organism>
<reference key="1">
    <citation type="journal article" date="2002" name="Nature">
        <title>The genome sequence of Schizosaccharomyces pombe.</title>
        <authorList>
            <person name="Wood V."/>
            <person name="Gwilliam R."/>
            <person name="Rajandream M.A."/>
            <person name="Lyne M.H."/>
            <person name="Lyne R."/>
            <person name="Stewart A."/>
            <person name="Sgouros J.G."/>
            <person name="Peat N."/>
            <person name="Hayles J."/>
            <person name="Baker S.G."/>
            <person name="Basham D."/>
            <person name="Bowman S."/>
            <person name="Brooks K."/>
            <person name="Brown D."/>
            <person name="Brown S."/>
            <person name="Chillingworth T."/>
            <person name="Churcher C.M."/>
            <person name="Collins M."/>
            <person name="Connor R."/>
            <person name="Cronin A."/>
            <person name="Davis P."/>
            <person name="Feltwell T."/>
            <person name="Fraser A."/>
            <person name="Gentles S."/>
            <person name="Goble A."/>
            <person name="Hamlin N."/>
            <person name="Harris D.E."/>
            <person name="Hidalgo J."/>
            <person name="Hodgson G."/>
            <person name="Holroyd S."/>
            <person name="Hornsby T."/>
            <person name="Howarth S."/>
            <person name="Huckle E.J."/>
            <person name="Hunt S."/>
            <person name="Jagels K."/>
            <person name="James K.D."/>
            <person name="Jones L."/>
            <person name="Jones M."/>
            <person name="Leather S."/>
            <person name="McDonald S."/>
            <person name="McLean J."/>
            <person name="Mooney P."/>
            <person name="Moule S."/>
            <person name="Mungall K.L."/>
            <person name="Murphy L.D."/>
            <person name="Niblett D."/>
            <person name="Odell C."/>
            <person name="Oliver K."/>
            <person name="O'Neil S."/>
            <person name="Pearson D."/>
            <person name="Quail M.A."/>
            <person name="Rabbinowitsch E."/>
            <person name="Rutherford K.M."/>
            <person name="Rutter S."/>
            <person name="Saunders D."/>
            <person name="Seeger K."/>
            <person name="Sharp S."/>
            <person name="Skelton J."/>
            <person name="Simmonds M.N."/>
            <person name="Squares R."/>
            <person name="Squares S."/>
            <person name="Stevens K."/>
            <person name="Taylor K."/>
            <person name="Taylor R.G."/>
            <person name="Tivey A."/>
            <person name="Walsh S.V."/>
            <person name="Warren T."/>
            <person name="Whitehead S."/>
            <person name="Woodward J.R."/>
            <person name="Volckaert G."/>
            <person name="Aert R."/>
            <person name="Robben J."/>
            <person name="Grymonprez B."/>
            <person name="Weltjens I."/>
            <person name="Vanstreels E."/>
            <person name="Rieger M."/>
            <person name="Schaefer M."/>
            <person name="Mueller-Auer S."/>
            <person name="Gabel C."/>
            <person name="Fuchs M."/>
            <person name="Duesterhoeft A."/>
            <person name="Fritzc C."/>
            <person name="Holzer E."/>
            <person name="Moestl D."/>
            <person name="Hilbert H."/>
            <person name="Borzym K."/>
            <person name="Langer I."/>
            <person name="Beck A."/>
            <person name="Lehrach H."/>
            <person name="Reinhardt R."/>
            <person name="Pohl T.M."/>
            <person name="Eger P."/>
            <person name="Zimmermann W."/>
            <person name="Wedler H."/>
            <person name="Wambutt R."/>
            <person name="Purnelle B."/>
            <person name="Goffeau A."/>
            <person name="Cadieu E."/>
            <person name="Dreano S."/>
            <person name="Gloux S."/>
            <person name="Lelaure V."/>
            <person name="Mottier S."/>
            <person name="Galibert F."/>
            <person name="Aves S.J."/>
            <person name="Xiang Z."/>
            <person name="Hunt C."/>
            <person name="Moore K."/>
            <person name="Hurst S.M."/>
            <person name="Lucas M."/>
            <person name="Rochet M."/>
            <person name="Gaillardin C."/>
            <person name="Tallada V.A."/>
            <person name="Garzon A."/>
            <person name="Thode G."/>
            <person name="Daga R.R."/>
            <person name="Cruzado L."/>
            <person name="Jimenez J."/>
            <person name="Sanchez M."/>
            <person name="del Rey F."/>
            <person name="Benito J."/>
            <person name="Dominguez A."/>
            <person name="Revuelta J.L."/>
            <person name="Moreno S."/>
            <person name="Armstrong J."/>
            <person name="Forsburg S.L."/>
            <person name="Cerutti L."/>
            <person name="Lowe T."/>
            <person name="McCombie W.R."/>
            <person name="Paulsen I."/>
            <person name="Potashkin J."/>
            <person name="Shpakovski G.V."/>
            <person name="Ussery D."/>
            <person name="Barrell B.G."/>
            <person name="Nurse P."/>
        </authorList>
    </citation>
    <scope>NUCLEOTIDE SEQUENCE [LARGE SCALE GENOMIC DNA]</scope>
    <source>
        <strain>972 / ATCC 24843</strain>
    </source>
</reference>
<reference key="2">
    <citation type="journal article" date="2010" name="Cell Cycle">
        <title>High-throughput knockout screen in Schizosaccharomyces pombe identifies a novel gene required for efficient homolog disjunction during meiosis I.</title>
        <authorList>
            <person name="Rumpf C."/>
            <person name="Cipak L."/>
            <person name="Novatchkova M."/>
            <person name="Li Z."/>
            <person name="Polakova S."/>
            <person name="Dudas A."/>
            <person name="Kovacikova I."/>
            <person name="Miadokova E."/>
            <person name="Ammerer G."/>
            <person name="Gregan J."/>
        </authorList>
    </citation>
    <scope>IDENTIFICATION BY MASS SPECTROMETRY</scope>
    <scope>INTERACTION WITH DIL1</scope>
</reference>
<dbReference type="EC" id="3.4.13.19" evidence="2"/>
<dbReference type="EMBL" id="CU329670">
    <property type="protein sequence ID" value="CAB16385.1"/>
    <property type="molecule type" value="Genomic_DNA"/>
</dbReference>
<dbReference type="PIR" id="T11632">
    <property type="entry name" value="T11632"/>
</dbReference>
<dbReference type="SMR" id="O14124"/>
<dbReference type="BioGRID" id="279513">
    <property type="interactions" value="29"/>
</dbReference>
<dbReference type="STRING" id="284812.O14124"/>
<dbReference type="iPTMnet" id="O14124"/>
<dbReference type="PaxDb" id="4896-SPAC3A11.10c.1"/>
<dbReference type="EnsemblFungi" id="SPAC3A11.10c.1">
    <property type="protein sequence ID" value="SPAC3A11.10c.1:pep"/>
    <property type="gene ID" value="SPAC3A11.10c"/>
</dbReference>
<dbReference type="KEGG" id="spo:2543080"/>
<dbReference type="PomBase" id="SPAC3A11.10c"/>
<dbReference type="VEuPathDB" id="FungiDB:SPAC3A11.10c"/>
<dbReference type="eggNOG" id="KOG4127">
    <property type="taxonomic scope" value="Eukaryota"/>
</dbReference>
<dbReference type="HOGENOM" id="CLU_031404_4_2_1"/>
<dbReference type="InParanoid" id="O14124"/>
<dbReference type="OMA" id="CDHPRNI"/>
<dbReference type="PhylomeDB" id="O14124"/>
<dbReference type="Reactome" id="R-SPO-2142691">
    <property type="pathway name" value="Synthesis of Leukotrienes (LT) and Eoxins (EX)"/>
</dbReference>
<dbReference type="Reactome" id="R-SPO-5423646">
    <property type="pathway name" value="Aflatoxin activation and detoxification"/>
</dbReference>
<dbReference type="PRO" id="PR:O14124"/>
<dbReference type="Proteomes" id="UP000002485">
    <property type="component" value="Chromosome I"/>
</dbReference>
<dbReference type="GO" id="GO:0005794">
    <property type="term" value="C:Golgi apparatus"/>
    <property type="evidence" value="ECO:0007005"/>
    <property type="project" value="PomBase"/>
</dbReference>
<dbReference type="GO" id="GO:0004177">
    <property type="term" value="F:aminopeptidase activity"/>
    <property type="evidence" value="ECO:0007669"/>
    <property type="project" value="UniProtKB-KW"/>
</dbReference>
<dbReference type="GO" id="GO:0046872">
    <property type="term" value="F:metal ion binding"/>
    <property type="evidence" value="ECO:0007669"/>
    <property type="project" value="UniProtKB-KW"/>
</dbReference>
<dbReference type="GO" id="GO:0070573">
    <property type="term" value="F:metallodipeptidase activity"/>
    <property type="evidence" value="ECO:0000250"/>
    <property type="project" value="PomBase"/>
</dbReference>
<dbReference type="GO" id="GO:0006508">
    <property type="term" value="P:proteolysis"/>
    <property type="evidence" value="ECO:0007669"/>
    <property type="project" value="UniProtKB-KW"/>
</dbReference>
<dbReference type="CDD" id="cd01301">
    <property type="entry name" value="rDP_like"/>
    <property type="match status" value="1"/>
</dbReference>
<dbReference type="Gene3D" id="3.20.20.140">
    <property type="entry name" value="Metal-dependent hydrolases"/>
    <property type="match status" value="1"/>
</dbReference>
<dbReference type="InterPro" id="IPR032466">
    <property type="entry name" value="Metal_Hydrolase"/>
</dbReference>
<dbReference type="InterPro" id="IPR008257">
    <property type="entry name" value="Pept_M19"/>
</dbReference>
<dbReference type="PANTHER" id="PTHR10443:SF12">
    <property type="entry name" value="DIPEPTIDASE"/>
    <property type="match status" value="1"/>
</dbReference>
<dbReference type="PANTHER" id="PTHR10443">
    <property type="entry name" value="MICROSOMAL DIPEPTIDASE"/>
    <property type="match status" value="1"/>
</dbReference>
<dbReference type="Pfam" id="PF01244">
    <property type="entry name" value="Peptidase_M19"/>
    <property type="match status" value="1"/>
</dbReference>
<dbReference type="SUPFAM" id="SSF51556">
    <property type="entry name" value="Metallo-dependent hydrolases"/>
    <property type="match status" value="1"/>
</dbReference>
<dbReference type="PROSITE" id="PS51365">
    <property type="entry name" value="RENAL_DIPEPTIDASE_2"/>
    <property type="match status" value="1"/>
</dbReference>
<protein>
    <recommendedName>
        <fullName>Uncharacterized dipeptidase C3A11.10c</fullName>
        <ecNumber evidence="2">3.4.13.19</ecNumber>
    </recommendedName>
</protein>
<evidence type="ECO:0000255" key="1"/>
<evidence type="ECO:0000255" key="2">
    <source>
        <dbReference type="PROSITE-ProRule" id="PRU10073"/>
    </source>
</evidence>
<evidence type="ECO:0000269" key="3">
    <source>
    </source>
</evidence>
<gene>
    <name type="ORF">SPAC3A11.10c</name>
</gene>